<protein>
    <recommendedName>
        <fullName evidence="1">Cytidylate kinase</fullName>
        <shortName evidence="1">CK</shortName>
        <ecNumber evidence="1">2.7.4.25</ecNumber>
    </recommendedName>
    <alternativeName>
        <fullName evidence="1">Cytidine monophosphate kinase</fullName>
        <shortName evidence="1">CMP kinase</shortName>
    </alternativeName>
</protein>
<evidence type="ECO:0000255" key="1">
    <source>
        <dbReference type="HAMAP-Rule" id="MF_00238"/>
    </source>
</evidence>
<proteinExistence type="inferred from homology"/>
<feature type="chain" id="PRO_0000131892" description="Cytidylate kinase">
    <location>
        <begin position="1"/>
        <end position="219"/>
    </location>
</feature>
<feature type="binding site" evidence="1">
    <location>
        <begin position="15"/>
        <end position="23"/>
    </location>
    <ligand>
        <name>ATP</name>
        <dbReference type="ChEBI" id="CHEBI:30616"/>
    </ligand>
</feature>
<dbReference type="EC" id="2.7.4.25" evidence="1"/>
<dbReference type="EMBL" id="AE014291">
    <property type="protein sequence ID" value="AAN28983.1"/>
    <property type="molecule type" value="Genomic_DNA"/>
</dbReference>
<dbReference type="EMBL" id="CP002997">
    <property type="protein sequence ID" value="AEM17395.1"/>
    <property type="molecule type" value="Genomic_DNA"/>
</dbReference>
<dbReference type="RefSeq" id="WP_004691210.1">
    <property type="nucleotide sequence ID" value="NZ_KN046804.1"/>
</dbReference>
<dbReference type="SMR" id="Q8G3C3"/>
<dbReference type="GeneID" id="55589832"/>
<dbReference type="KEGG" id="bms:BR0026"/>
<dbReference type="KEGG" id="bsi:BS1330_I0026"/>
<dbReference type="PATRIC" id="fig|204722.21.peg.590"/>
<dbReference type="HOGENOM" id="CLU_079959_0_1_5"/>
<dbReference type="PhylomeDB" id="Q8G3C3"/>
<dbReference type="Proteomes" id="UP000007104">
    <property type="component" value="Chromosome I"/>
</dbReference>
<dbReference type="GO" id="GO:0005737">
    <property type="term" value="C:cytoplasm"/>
    <property type="evidence" value="ECO:0007669"/>
    <property type="project" value="UniProtKB-SubCell"/>
</dbReference>
<dbReference type="GO" id="GO:0005524">
    <property type="term" value="F:ATP binding"/>
    <property type="evidence" value="ECO:0007669"/>
    <property type="project" value="UniProtKB-UniRule"/>
</dbReference>
<dbReference type="GO" id="GO:0036430">
    <property type="term" value="F:CMP kinase activity"/>
    <property type="evidence" value="ECO:0007669"/>
    <property type="project" value="RHEA"/>
</dbReference>
<dbReference type="GO" id="GO:0036431">
    <property type="term" value="F:dCMP kinase activity"/>
    <property type="evidence" value="ECO:0007669"/>
    <property type="project" value="RHEA"/>
</dbReference>
<dbReference type="GO" id="GO:0006220">
    <property type="term" value="P:pyrimidine nucleotide metabolic process"/>
    <property type="evidence" value="ECO:0007669"/>
    <property type="project" value="UniProtKB-UniRule"/>
</dbReference>
<dbReference type="CDD" id="cd02020">
    <property type="entry name" value="CMPK"/>
    <property type="match status" value="1"/>
</dbReference>
<dbReference type="Gene3D" id="3.40.50.300">
    <property type="entry name" value="P-loop containing nucleotide triphosphate hydrolases"/>
    <property type="match status" value="1"/>
</dbReference>
<dbReference type="HAMAP" id="MF_00238">
    <property type="entry name" value="Cytidyl_kinase_type1"/>
    <property type="match status" value="1"/>
</dbReference>
<dbReference type="InterPro" id="IPR003136">
    <property type="entry name" value="Cytidylate_kin"/>
</dbReference>
<dbReference type="InterPro" id="IPR011994">
    <property type="entry name" value="Cytidylate_kinase_dom"/>
</dbReference>
<dbReference type="InterPro" id="IPR027417">
    <property type="entry name" value="P-loop_NTPase"/>
</dbReference>
<dbReference type="NCBIfam" id="TIGR00017">
    <property type="entry name" value="cmk"/>
    <property type="match status" value="1"/>
</dbReference>
<dbReference type="Pfam" id="PF02224">
    <property type="entry name" value="Cytidylate_kin"/>
    <property type="match status" value="1"/>
</dbReference>
<dbReference type="SUPFAM" id="SSF52540">
    <property type="entry name" value="P-loop containing nucleoside triphosphate hydrolases"/>
    <property type="match status" value="1"/>
</dbReference>
<accession>Q8G3C3</accession>
<accession>G0KAJ8</accession>
<name>KCY_BRUSU</name>
<gene>
    <name evidence="1" type="primary">cmk</name>
    <name type="ordered locus">BR0026</name>
    <name type="ordered locus">BS1330_I0026</name>
</gene>
<comment type="catalytic activity">
    <reaction evidence="1">
        <text>CMP + ATP = CDP + ADP</text>
        <dbReference type="Rhea" id="RHEA:11600"/>
        <dbReference type="ChEBI" id="CHEBI:30616"/>
        <dbReference type="ChEBI" id="CHEBI:58069"/>
        <dbReference type="ChEBI" id="CHEBI:60377"/>
        <dbReference type="ChEBI" id="CHEBI:456216"/>
        <dbReference type="EC" id="2.7.4.25"/>
    </reaction>
</comment>
<comment type="catalytic activity">
    <reaction evidence="1">
        <text>dCMP + ATP = dCDP + ADP</text>
        <dbReference type="Rhea" id="RHEA:25094"/>
        <dbReference type="ChEBI" id="CHEBI:30616"/>
        <dbReference type="ChEBI" id="CHEBI:57566"/>
        <dbReference type="ChEBI" id="CHEBI:58593"/>
        <dbReference type="ChEBI" id="CHEBI:456216"/>
        <dbReference type="EC" id="2.7.4.25"/>
    </reaction>
</comment>
<comment type="subcellular location">
    <subcellularLocation>
        <location evidence="1">Cytoplasm</location>
    </subcellularLocation>
</comment>
<comment type="similarity">
    <text evidence="1">Belongs to the cytidylate kinase family. Type 1 subfamily.</text>
</comment>
<sequence length="219" mass="23402">MKSFVVAPFIVAIDGPAASGKGTLARRIATHYGMPHLDTGLTYRAVAKALLDKGLSLDDEALATDAALSLDLLAMDKAVLSAHAIGEAASKVAVMPAVRRALVEAQRHFANALPSSVLDGRDIGTVVCPDAAIKLFVTASPEVRARRRFDEVLARGDTADFAEILADLKKRDERDMNRTDSPLRPAEDAHLLDTSEMSIEAAFLAAKKLIDHALAQHRG</sequence>
<keyword id="KW-0067">ATP-binding</keyword>
<keyword id="KW-0963">Cytoplasm</keyword>
<keyword id="KW-0418">Kinase</keyword>
<keyword id="KW-0547">Nucleotide-binding</keyword>
<keyword id="KW-0808">Transferase</keyword>
<organism>
    <name type="scientific">Brucella suis biovar 1 (strain 1330)</name>
    <dbReference type="NCBI Taxonomy" id="204722"/>
    <lineage>
        <taxon>Bacteria</taxon>
        <taxon>Pseudomonadati</taxon>
        <taxon>Pseudomonadota</taxon>
        <taxon>Alphaproteobacteria</taxon>
        <taxon>Hyphomicrobiales</taxon>
        <taxon>Brucellaceae</taxon>
        <taxon>Brucella/Ochrobactrum group</taxon>
        <taxon>Brucella</taxon>
    </lineage>
</organism>
<reference key="1">
    <citation type="journal article" date="2002" name="Proc. Natl. Acad. Sci. U.S.A.">
        <title>The Brucella suis genome reveals fundamental similarities between animal and plant pathogens and symbionts.</title>
        <authorList>
            <person name="Paulsen I.T."/>
            <person name="Seshadri R."/>
            <person name="Nelson K.E."/>
            <person name="Eisen J.A."/>
            <person name="Heidelberg J.F."/>
            <person name="Read T.D."/>
            <person name="Dodson R.J."/>
            <person name="Umayam L.A."/>
            <person name="Brinkac L.M."/>
            <person name="Beanan M.J."/>
            <person name="Daugherty S.C."/>
            <person name="DeBoy R.T."/>
            <person name="Durkin A.S."/>
            <person name="Kolonay J.F."/>
            <person name="Madupu R."/>
            <person name="Nelson W.C."/>
            <person name="Ayodeji B."/>
            <person name="Kraul M."/>
            <person name="Shetty J."/>
            <person name="Malek J.A."/>
            <person name="Van Aken S.E."/>
            <person name="Riedmuller S."/>
            <person name="Tettelin H."/>
            <person name="Gill S.R."/>
            <person name="White O."/>
            <person name="Salzberg S.L."/>
            <person name="Hoover D.L."/>
            <person name="Lindler L.E."/>
            <person name="Halling S.M."/>
            <person name="Boyle S.M."/>
            <person name="Fraser C.M."/>
        </authorList>
    </citation>
    <scope>NUCLEOTIDE SEQUENCE [LARGE SCALE GENOMIC DNA]</scope>
    <source>
        <strain>1330</strain>
    </source>
</reference>
<reference key="2">
    <citation type="journal article" date="2011" name="J. Bacteriol.">
        <title>Revised genome sequence of Brucella suis 1330.</title>
        <authorList>
            <person name="Tae H."/>
            <person name="Shallom S."/>
            <person name="Settlage R."/>
            <person name="Preston D."/>
            <person name="Adams L.G."/>
            <person name="Garner H.R."/>
        </authorList>
    </citation>
    <scope>NUCLEOTIDE SEQUENCE [LARGE SCALE GENOMIC DNA]</scope>
    <source>
        <strain>1330</strain>
    </source>
</reference>